<dbReference type="EMBL" id="X73124">
    <property type="protein sequence ID" value="CAA51578.1"/>
    <property type="molecule type" value="Genomic_DNA"/>
</dbReference>
<dbReference type="EMBL" id="AL009126">
    <property type="protein sequence ID" value="CAB15859.2"/>
    <property type="molecule type" value="Genomic_DNA"/>
</dbReference>
<dbReference type="PIR" id="S39677">
    <property type="entry name" value="S39677"/>
</dbReference>
<dbReference type="RefSeq" id="WP_003227371.1">
    <property type="nucleotide sequence ID" value="NZ_OZ025638.1"/>
</dbReference>
<dbReference type="SMR" id="P39590"/>
<dbReference type="FunCoup" id="P39590">
    <property type="interactions" value="85"/>
</dbReference>
<dbReference type="STRING" id="224308.BSU38330"/>
<dbReference type="TCDB" id="2.A.122.1.5">
    <property type="family name" value="the lrgb/cidb holin-like glycolate/glycerate transporter (lrgb/cidb/ggt) family"/>
</dbReference>
<dbReference type="PaxDb" id="224308-BSU38330"/>
<dbReference type="EnsemblBacteria" id="CAB15859">
    <property type="protein sequence ID" value="CAB15859"/>
    <property type="gene ID" value="BSU_38330"/>
</dbReference>
<dbReference type="GeneID" id="937323"/>
<dbReference type="KEGG" id="bsu:BSU38330"/>
<dbReference type="PATRIC" id="fig|224308.179.peg.4149"/>
<dbReference type="eggNOG" id="COG1346">
    <property type="taxonomic scope" value="Bacteria"/>
</dbReference>
<dbReference type="InParanoid" id="P39590"/>
<dbReference type="OrthoDB" id="9811701at2"/>
<dbReference type="PhylomeDB" id="P39590"/>
<dbReference type="BioCyc" id="BSUB:BSU38330-MONOMER"/>
<dbReference type="Proteomes" id="UP000001570">
    <property type="component" value="Chromosome"/>
</dbReference>
<dbReference type="GO" id="GO:0005886">
    <property type="term" value="C:plasma membrane"/>
    <property type="evidence" value="ECO:0007669"/>
    <property type="project" value="UniProtKB-SubCell"/>
</dbReference>
<dbReference type="InterPro" id="IPR007300">
    <property type="entry name" value="CidB/LrgB"/>
</dbReference>
<dbReference type="InterPro" id="IPR005261">
    <property type="entry name" value="YohK-like"/>
</dbReference>
<dbReference type="NCBIfam" id="TIGR00659">
    <property type="entry name" value="CidB/LrgB family autolysis modulator"/>
    <property type="match status" value="1"/>
</dbReference>
<dbReference type="PANTHER" id="PTHR30249:SF3">
    <property type="entry name" value="MUREIN HYDROLASE EXPORT REGULATOR"/>
    <property type="match status" value="1"/>
</dbReference>
<dbReference type="PANTHER" id="PTHR30249">
    <property type="entry name" value="PUTATIVE SEROTONIN TRANSPORTER"/>
    <property type="match status" value="1"/>
</dbReference>
<dbReference type="Pfam" id="PF04172">
    <property type="entry name" value="LrgB"/>
    <property type="match status" value="1"/>
</dbReference>
<proteinExistence type="inferred from homology"/>
<organism>
    <name type="scientific">Bacillus subtilis (strain 168)</name>
    <dbReference type="NCBI Taxonomy" id="224308"/>
    <lineage>
        <taxon>Bacteria</taxon>
        <taxon>Bacillati</taxon>
        <taxon>Bacillota</taxon>
        <taxon>Bacilli</taxon>
        <taxon>Bacillales</taxon>
        <taxon>Bacillaceae</taxon>
        <taxon>Bacillus</taxon>
    </lineage>
</organism>
<accession>P39590</accession>
<sequence>MFIGIVSLFLTVLVYLGAKKVYQRFPRVYTSPLLVTPAVLVGLLLLVNVPYESYNLGGGLLTDMLQPATVAFAIPLYKYFPVLKKYAVEIILNVAVGSCIAIISTALIAKWLHLGTGLIDSLVPRSVTTPIAMNVSEMIGGMPAVTAVFVILTALLGTVIGPMVIRYFRIDNEIARGVLLGTSAHGAGTSKAFELSSVSGTISSVSMILAAIMTLCAAPFLLSFM</sequence>
<name>YWBG_BACSU</name>
<gene>
    <name type="primary">ywbG</name>
    <name type="ordered locus">BSU38330</name>
    <name type="ORF">ipa-22r</name>
</gene>
<protein>
    <recommendedName>
        <fullName>Uncharacterized protein YwbG</fullName>
    </recommendedName>
</protein>
<feature type="chain" id="PRO_0000049953" description="Uncharacterized protein YwbG">
    <location>
        <begin position="1"/>
        <end position="225"/>
    </location>
</feature>
<feature type="transmembrane region" description="Helical" evidence="1">
    <location>
        <begin position="1"/>
        <end position="21"/>
    </location>
</feature>
<feature type="transmembrane region" description="Helical" evidence="1">
    <location>
        <begin position="31"/>
        <end position="51"/>
    </location>
</feature>
<feature type="transmembrane region" description="Helical" evidence="1">
    <location>
        <begin position="56"/>
        <end position="76"/>
    </location>
</feature>
<feature type="transmembrane region" description="Helical" evidence="1">
    <location>
        <begin position="88"/>
        <end position="108"/>
    </location>
</feature>
<feature type="transmembrane region" description="Helical" evidence="1">
    <location>
        <begin position="145"/>
        <end position="165"/>
    </location>
</feature>
<feature type="transmembrane region" description="Helical" evidence="1">
    <location>
        <begin position="205"/>
        <end position="225"/>
    </location>
</feature>
<feature type="sequence conflict" description="In Ref. 1; CAA51578." evidence="2" ref="1">
    <original>MN</original>
    <variation>VH</variation>
    <location>
        <begin position="133"/>
        <end position="134"/>
    </location>
</feature>
<feature type="sequence conflict" description="In Ref. 1; CAA51578." evidence="2" ref="1">
    <original>CA</original>
    <variation>WP</variation>
    <location>
        <begin position="216"/>
        <end position="217"/>
    </location>
</feature>
<feature type="sequence conflict" description="In Ref. 1; CAA51578." evidence="2" ref="1">
    <original>LLSFM</original>
    <variation>CFHLCKKLSSRGQFFLCASPY</variation>
    <location>
        <begin position="221"/>
        <end position="225"/>
    </location>
</feature>
<evidence type="ECO:0000255" key="1"/>
<evidence type="ECO:0000305" key="2"/>
<keyword id="KW-1003">Cell membrane</keyword>
<keyword id="KW-0472">Membrane</keyword>
<keyword id="KW-1185">Reference proteome</keyword>
<keyword id="KW-0812">Transmembrane</keyword>
<keyword id="KW-1133">Transmembrane helix</keyword>
<reference key="1">
    <citation type="journal article" date="1993" name="Mol. Microbiol.">
        <title>Bacillus subtilis genome project: cloning and sequencing of the 97 kb region from 325 degrees to 333 degrees.</title>
        <authorList>
            <person name="Glaser P."/>
            <person name="Kunst F."/>
            <person name="Arnaud M."/>
            <person name="Coudart M.P."/>
            <person name="Gonzales W."/>
            <person name="Hullo M.-F."/>
            <person name="Ionescu M."/>
            <person name="Lubochinsky B."/>
            <person name="Marcelino L."/>
            <person name="Moszer I."/>
            <person name="Presecan E."/>
            <person name="Santana M."/>
            <person name="Schneider E."/>
            <person name="Schweizer J."/>
            <person name="Vertes A."/>
            <person name="Rapoport G."/>
            <person name="Danchin A."/>
        </authorList>
    </citation>
    <scope>NUCLEOTIDE SEQUENCE [GENOMIC DNA]</scope>
    <source>
        <strain>168</strain>
    </source>
</reference>
<reference key="2">
    <citation type="journal article" date="1997" name="Nature">
        <title>The complete genome sequence of the Gram-positive bacterium Bacillus subtilis.</title>
        <authorList>
            <person name="Kunst F."/>
            <person name="Ogasawara N."/>
            <person name="Moszer I."/>
            <person name="Albertini A.M."/>
            <person name="Alloni G."/>
            <person name="Azevedo V."/>
            <person name="Bertero M.G."/>
            <person name="Bessieres P."/>
            <person name="Bolotin A."/>
            <person name="Borchert S."/>
            <person name="Borriss R."/>
            <person name="Boursier L."/>
            <person name="Brans A."/>
            <person name="Braun M."/>
            <person name="Brignell S.C."/>
            <person name="Bron S."/>
            <person name="Brouillet S."/>
            <person name="Bruschi C.V."/>
            <person name="Caldwell B."/>
            <person name="Capuano V."/>
            <person name="Carter N.M."/>
            <person name="Choi S.-K."/>
            <person name="Codani J.-J."/>
            <person name="Connerton I.F."/>
            <person name="Cummings N.J."/>
            <person name="Daniel R.A."/>
            <person name="Denizot F."/>
            <person name="Devine K.M."/>
            <person name="Duesterhoeft A."/>
            <person name="Ehrlich S.D."/>
            <person name="Emmerson P.T."/>
            <person name="Entian K.-D."/>
            <person name="Errington J."/>
            <person name="Fabret C."/>
            <person name="Ferrari E."/>
            <person name="Foulger D."/>
            <person name="Fritz C."/>
            <person name="Fujita M."/>
            <person name="Fujita Y."/>
            <person name="Fuma S."/>
            <person name="Galizzi A."/>
            <person name="Galleron N."/>
            <person name="Ghim S.-Y."/>
            <person name="Glaser P."/>
            <person name="Goffeau A."/>
            <person name="Golightly E.J."/>
            <person name="Grandi G."/>
            <person name="Guiseppi G."/>
            <person name="Guy B.J."/>
            <person name="Haga K."/>
            <person name="Haiech J."/>
            <person name="Harwood C.R."/>
            <person name="Henaut A."/>
            <person name="Hilbert H."/>
            <person name="Holsappel S."/>
            <person name="Hosono S."/>
            <person name="Hullo M.-F."/>
            <person name="Itaya M."/>
            <person name="Jones L.-M."/>
            <person name="Joris B."/>
            <person name="Karamata D."/>
            <person name="Kasahara Y."/>
            <person name="Klaerr-Blanchard M."/>
            <person name="Klein C."/>
            <person name="Kobayashi Y."/>
            <person name="Koetter P."/>
            <person name="Koningstein G."/>
            <person name="Krogh S."/>
            <person name="Kumano M."/>
            <person name="Kurita K."/>
            <person name="Lapidus A."/>
            <person name="Lardinois S."/>
            <person name="Lauber J."/>
            <person name="Lazarevic V."/>
            <person name="Lee S.-M."/>
            <person name="Levine A."/>
            <person name="Liu H."/>
            <person name="Masuda S."/>
            <person name="Mauel C."/>
            <person name="Medigue C."/>
            <person name="Medina N."/>
            <person name="Mellado R.P."/>
            <person name="Mizuno M."/>
            <person name="Moestl D."/>
            <person name="Nakai S."/>
            <person name="Noback M."/>
            <person name="Noone D."/>
            <person name="O'Reilly M."/>
            <person name="Ogawa K."/>
            <person name="Ogiwara A."/>
            <person name="Oudega B."/>
            <person name="Park S.-H."/>
            <person name="Parro V."/>
            <person name="Pohl T.M."/>
            <person name="Portetelle D."/>
            <person name="Porwollik S."/>
            <person name="Prescott A.M."/>
            <person name="Presecan E."/>
            <person name="Pujic P."/>
            <person name="Purnelle B."/>
            <person name="Rapoport G."/>
            <person name="Rey M."/>
            <person name="Reynolds S."/>
            <person name="Rieger M."/>
            <person name="Rivolta C."/>
            <person name="Rocha E."/>
            <person name="Roche B."/>
            <person name="Rose M."/>
            <person name="Sadaie Y."/>
            <person name="Sato T."/>
            <person name="Scanlan E."/>
            <person name="Schleich S."/>
            <person name="Schroeter R."/>
            <person name="Scoffone F."/>
            <person name="Sekiguchi J."/>
            <person name="Sekowska A."/>
            <person name="Seror S.J."/>
            <person name="Serror P."/>
            <person name="Shin B.-S."/>
            <person name="Soldo B."/>
            <person name="Sorokin A."/>
            <person name="Tacconi E."/>
            <person name="Takagi T."/>
            <person name="Takahashi H."/>
            <person name="Takemaru K."/>
            <person name="Takeuchi M."/>
            <person name="Tamakoshi A."/>
            <person name="Tanaka T."/>
            <person name="Terpstra P."/>
            <person name="Tognoni A."/>
            <person name="Tosato V."/>
            <person name="Uchiyama S."/>
            <person name="Vandenbol M."/>
            <person name="Vannier F."/>
            <person name="Vassarotti A."/>
            <person name="Viari A."/>
            <person name="Wambutt R."/>
            <person name="Wedler E."/>
            <person name="Wedler H."/>
            <person name="Weitzenegger T."/>
            <person name="Winters P."/>
            <person name="Wipat A."/>
            <person name="Yamamoto H."/>
            <person name="Yamane K."/>
            <person name="Yasumoto K."/>
            <person name="Yata K."/>
            <person name="Yoshida K."/>
            <person name="Yoshikawa H.-F."/>
            <person name="Zumstein E."/>
            <person name="Yoshikawa H."/>
            <person name="Danchin A."/>
        </authorList>
    </citation>
    <scope>NUCLEOTIDE SEQUENCE [LARGE SCALE GENOMIC DNA]</scope>
    <source>
        <strain>168</strain>
    </source>
</reference>
<reference key="3">
    <citation type="journal article" date="2009" name="Microbiology">
        <title>From a consortium sequence to a unified sequence: the Bacillus subtilis 168 reference genome a decade later.</title>
        <authorList>
            <person name="Barbe V."/>
            <person name="Cruveiller S."/>
            <person name="Kunst F."/>
            <person name="Lenoble P."/>
            <person name="Meurice G."/>
            <person name="Sekowska A."/>
            <person name="Vallenet D."/>
            <person name="Wang T."/>
            <person name="Moszer I."/>
            <person name="Medigue C."/>
            <person name="Danchin A."/>
        </authorList>
    </citation>
    <scope>SEQUENCE REVISION TO 133-134; 216-217 AND C-TERMINUS</scope>
</reference>
<comment type="subcellular location">
    <subcellularLocation>
        <location evidence="2">Cell membrane</location>
        <topology evidence="2">Multi-pass membrane protein</topology>
    </subcellularLocation>
</comment>
<comment type="similarity">
    <text evidence="2">Belongs to the YohK (E.coli)/YwbG (IPA-22R) (B.subtilis) family.</text>
</comment>